<gene>
    <name evidence="1" type="primary">purM</name>
    <name type="ordered locus">SYNW2029</name>
</gene>
<dbReference type="EC" id="6.3.3.1" evidence="1"/>
<dbReference type="EMBL" id="BX569694">
    <property type="protein sequence ID" value="CAE08544.1"/>
    <property type="molecule type" value="Genomic_DNA"/>
</dbReference>
<dbReference type="RefSeq" id="WP_011128887.1">
    <property type="nucleotide sequence ID" value="NC_005070.1"/>
</dbReference>
<dbReference type="SMR" id="Q7U4N8"/>
<dbReference type="STRING" id="84588.SYNW2029"/>
<dbReference type="KEGG" id="syw:SYNW2029"/>
<dbReference type="eggNOG" id="COG0150">
    <property type="taxonomic scope" value="Bacteria"/>
</dbReference>
<dbReference type="HOGENOM" id="CLU_047116_0_0_3"/>
<dbReference type="UniPathway" id="UPA00074">
    <property type="reaction ID" value="UER00129"/>
</dbReference>
<dbReference type="Proteomes" id="UP000001422">
    <property type="component" value="Chromosome"/>
</dbReference>
<dbReference type="GO" id="GO:0005829">
    <property type="term" value="C:cytosol"/>
    <property type="evidence" value="ECO:0007669"/>
    <property type="project" value="TreeGrafter"/>
</dbReference>
<dbReference type="GO" id="GO:0005524">
    <property type="term" value="F:ATP binding"/>
    <property type="evidence" value="ECO:0007669"/>
    <property type="project" value="UniProtKB-KW"/>
</dbReference>
<dbReference type="GO" id="GO:0004637">
    <property type="term" value="F:phosphoribosylamine-glycine ligase activity"/>
    <property type="evidence" value="ECO:0007669"/>
    <property type="project" value="TreeGrafter"/>
</dbReference>
<dbReference type="GO" id="GO:0004641">
    <property type="term" value="F:phosphoribosylformylglycinamidine cyclo-ligase activity"/>
    <property type="evidence" value="ECO:0007669"/>
    <property type="project" value="UniProtKB-UniRule"/>
</dbReference>
<dbReference type="GO" id="GO:0006189">
    <property type="term" value="P:'de novo' IMP biosynthetic process"/>
    <property type="evidence" value="ECO:0007669"/>
    <property type="project" value="UniProtKB-UniRule"/>
</dbReference>
<dbReference type="GO" id="GO:0046084">
    <property type="term" value="P:adenine biosynthetic process"/>
    <property type="evidence" value="ECO:0007669"/>
    <property type="project" value="TreeGrafter"/>
</dbReference>
<dbReference type="CDD" id="cd02196">
    <property type="entry name" value="PurM"/>
    <property type="match status" value="1"/>
</dbReference>
<dbReference type="FunFam" id="3.30.1330.10:FF:000001">
    <property type="entry name" value="Phosphoribosylformylglycinamidine cyclo-ligase"/>
    <property type="match status" value="1"/>
</dbReference>
<dbReference type="FunFam" id="3.90.650.10:FF:000011">
    <property type="entry name" value="Phosphoribosylformylglycinamidine cyclo-ligase"/>
    <property type="match status" value="1"/>
</dbReference>
<dbReference type="Gene3D" id="3.90.650.10">
    <property type="entry name" value="PurM-like C-terminal domain"/>
    <property type="match status" value="1"/>
</dbReference>
<dbReference type="Gene3D" id="3.30.1330.10">
    <property type="entry name" value="PurM-like, N-terminal domain"/>
    <property type="match status" value="1"/>
</dbReference>
<dbReference type="HAMAP" id="MF_00741">
    <property type="entry name" value="AIRS"/>
    <property type="match status" value="1"/>
</dbReference>
<dbReference type="InterPro" id="IPR010918">
    <property type="entry name" value="PurM-like_C_dom"/>
</dbReference>
<dbReference type="InterPro" id="IPR036676">
    <property type="entry name" value="PurM-like_C_sf"/>
</dbReference>
<dbReference type="InterPro" id="IPR016188">
    <property type="entry name" value="PurM-like_N"/>
</dbReference>
<dbReference type="InterPro" id="IPR036921">
    <property type="entry name" value="PurM-like_N_sf"/>
</dbReference>
<dbReference type="InterPro" id="IPR004733">
    <property type="entry name" value="PurM_cligase"/>
</dbReference>
<dbReference type="NCBIfam" id="TIGR00878">
    <property type="entry name" value="purM"/>
    <property type="match status" value="1"/>
</dbReference>
<dbReference type="PANTHER" id="PTHR10520:SF12">
    <property type="entry name" value="TRIFUNCTIONAL PURINE BIOSYNTHETIC PROTEIN ADENOSINE-3"/>
    <property type="match status" value="1"/>
</dbReference>
<dbReference type="PANTHER" id="PTHR10520">
    <property type="entry name" value="TRIFUNCTIONAL PURINE BIOSYNTHETIC PROTEIN ADENOSINE-3-RELATED"/>
    <property type="match status" value="1"/>
</dbReference>
<dbReference type="Pfam" id="PF00586">
    <property type="entry name" value="AIRS"/>
    <property type="match status" value="1"/>
</dbReference>
<dbReference type="Pfam" id="PF02769">
    <property type="entry name" value="AIRS_C"/>
    <property type="match status" value="1"/>
</dbReference>
<dbReference type="SUPFAM" id="SSF56042">
    <property type="entry name" value="PurM C-terminal domain-like"/>
    <property type="match status" value="1"/>
</dbReference>
<dbReference type="SUPFAM" id="SSF55326">
    <property type="entry name" value="PurM N-terminal domain-like"/>
    <property type="match status" value="1"/>
</dbReference>
<sequence>MDYKSAGVDVEAGRAFVQRIKSSVEATHRQEVVGGLGGFGGMMRLPAGLRQPLLVSGTDGVGTKLELAQDHQAHHNVGIDLVAMCVNDVITSGAQPLFFLDYMATGALSPDAMAEVVEGIADGCQQSGCSLLGGETAEMPGFYPAGRYDLAGFCVAVVEENELIDGQQVQPGDAVIGVASSGVHSNGFSLVRRVLAQAKADRSTLYGPDQRPLIDDLLRPTQLYASLVKHLLSSSLPIHAMAHITGGGLPENLPRCLPTGCRAQVSPTSWARPPLFDWLQSAGGIPERDLWHTFNLGIGFCVVVPRDQIDRTVAACRAQQLQAWPIGSIVEGNPEDGVIGLPD</sequence>
<reference key="1">
    <citation type="journal article" date="2003" name="Nature">
        <title>The genome of a motile marine Synechococcus.</title>
        <authorList>
            <person name="Palenik B."/>
            <person name="Brahamsha B."/>
            <person name="Larimer F.W."/>
            <person name="Land M.L."/>
            <person name="Hauser L."/>
            <person name="Chain P."/>
            <person name="Lamerdin J.E."/>
            <person name="Regala W."/>
            <person name="Allen E.E."/>
            <person name="McCarren J."/>
            <person name="Paulsen I.T."/>
            <person name="Dufresne A."/>
            <person name="Partensky F."/>
            <person name="Webb E.A."/>
            <person name="Waterbury J."/>
        </authorList>
    </citation>
    <scope>NUCLEOTIDE SEQUENCE [LARGE SCALE GENOMIC DNA]</scope>
    <source>
        <strain>WH8102</strain>
    </source>
</reference>
<comment type="catalytic activity">
    <reaction evidence="1">
        <text>2-formamido-N(1)-(5-O-phospho-beta-D-ribosyl)acetamidine + ATP = 5-amino-1-(5-phospho-beta-D-ribosyl)imidazole + ADP + phosphate + H(+)</text>
        <dbReference type="Rhea" id="RHEA:23032"/>
        <dbReference type="ChEBI" id="CHEBI:15378"/>
        <dbReference type="ChEBI" id="CHEBI:30616"/>
        <dbReference type="ChEBI" id="CHEBI:43474"/>
        <dbReference type="ChEBI" id="CHEBI:137981"/>
        <dbReference type="ChEBI" id="CHEBI:147287"/>
        <dbReference type="ChEBI" id="CHEBI:456216"/>
        <dbReference type="EC" id="6.3.3.1"/>
    </reaction>
</comment>
<comment type="pathway">
    <text evidence="1">Purine metabolism; IMP biosynthesis via de novo pathway; 5-amino-1-(5-phospho-D-ribosyl)imidazole from N(2)-formyl-N(1)-(5-phospho-D-ribosyl)glycinamide: step 2/2.</text>
</comment>
<comment type="subcellular location">
    <subcellularLocation>
        <location evidence="1">Cytoplasm</location>
    </subcellularLocation>
</comment>
<comment type="similarity">
    <text evidence="1">Belongs to the AIR synthase family.</text>
</comment>
<name>PUR5_PARMW</name>
<organism>
    <name type="scientific">Parasynechococcus marenigrum (strain WH8102)</name>
    <dbReference type="NCBI Taxonomy" id="84588"/>
    <lineage>
        <taxon>Bacteria</taxon>
        <taxon>Bacillati</taxon>
        <taxon>Cyanobacteriota</taxon>
        <taxon>Cyanophyceae</taxon>
        <taxon>Synechococcales</taxon>
        <taxon>Prochlorococcaceae</taxon>
        <taxon>Parasynechococcus</taxon>
        <taxon>Parasynechococcus marenigrum</taxon>
    </lineage>
</organism>
<accession>Q7U4N8</accession>
<protein>
    <recommendedName>
        <fullName evidence="1">Phosphoribosylformylglycinamidine cyclo-ligase</fullName>
        <ecNumber evidence="1">6.3.3.1</ecNumber>
    </recommendedName>
    <alternativeName>
        <fullName evidence="1">AIR synthase</fullName>
    </alternativeName>
    <alternativeName>
        <fullName evidence="1">AIRS</fullName>
    </alternativeName>
    <alternativeName>
        <fullName evidence="1">Phosphoribosyl-aminoimidazole synthetase</fullName>
    </alternativeName>
</protein>
<feature type="chain" id="PRO_0000148267" description="Phosphoribosylformylglycinamidine cyclo-ligase">
    <location>
        <begin position="1"/>
        <end position="343"/>
    </location>
</feature>
<proteinExistence type="inferred from homology"/>
<evidence type="ECO:0000255" key="1">
    <source>
        <dbReference type="HAMAP-Rule" id="MF_00741"/>
    </source>
</evidence>
<keyword id="KW-0067">ATP-binding</keyword>
<keyword id="KW-0963">Cytoplasm</keyword>
<keyword id="KW-0436">Ligase</keyword>
<keyword id="KW-0547">Nucleotide-binding</keyword>
<keyword id="KW-0658">Purine biosynthesis</keyword>